<evidence type="ECO:0000255" key="1">
    <source>
        <dbReference type="HAMAP-Rule" id="MF_00274"/>
    </source>
</evidence>
<dbReference type="EMBL" id="CP000947">
    <property type="protein sequence ID" value="ACA31941.1"/>
    <property type="molecule type" value="Genomic_DNA"/>
</dbReference>
<dbReference type="RefSeq" id="WP_011609463.1">
    <property type="nucleotide sequence ID" value="NC_010519.1"/>
</dbReference>
<dbReference type="SMR" id="B0UWK6"/>
<dbReference type="STRING" id="228400.HSM_0308"/>
<dbReference type="GeneID" id="31486589"/>
<dbReference type="KEGG" id="hsm:HSM_0308"/>
<dbReference type="HOGENOM" id="CLU_140930_0_0_6"/>
<dbReference type="GO" id="GO:0043590">
    <property type="term" value="C:bacterial nucleoid"/>
    <property type="evidence" value="ECO:0007669"/>
    <property type="project" value="UniProtKB-UniRule"/>
</dbReference>
<dbReference type="GO" id="GO:0005829">
    <property type="term" value="C:cytosol"/>
    <property type="evidence" value="ECO:0007669"/>
    <property type="project" value="TreeGrafter"/>
</dbReference>
<dbReference type="GO" id="GO:0003677">
    <property type="term" value="F:DNA binding"/>
    <property type="evidence" value="ECO:0007669"/>
    <property type="project" value="UniProtKB-UniRule"/>
</dbReference>
<dbReference type="FunFam" id="3.30.1310.10:FF:000001">
    <property type="entry name" value="Nucleoid-associated protein YbaB"/>
    <property type="match status" value="1"/>
</dbReference>
<dbReference type="Gene3D" id="3.30.1310.10">
    <property type="entry name" value="Nucleoid-associated protein YbaB-like domain"/>
    <property type="match status" value="1"/>
</dbReference>
<dbReference type="HAMAP" id="MF_00274">
    <property type="entry name" value="DNA_YbaB_EbfC"/>
    <property type="match status" value="1"/>
</dbReference>
<dbReference type="InterPro" id="IPR036894">
    <property type="entry name" value="YbaB-like_sf"/>
</dbReference>
<dbReference type="InterPro" id="IPR004401">
    <property type="entry name" value="YbaB/EbfC"/>
</dbReference>
<dbReference type="NCBIfam" id="TIGR00103">
    <property type="entry name" value="DNA_YbaB_EbfC"/>
    <property type="match status" value="1"/>
</dbReference>
<dbReference type="PANTHER" id="PTHR33449">
    <property type="entry name" value="NUCLEOID-ASSOCIATED PROTEIN YBAB"/>
    <property type="match status" value="1"/>
</dbReference>
<dbReference type="PANTHER" id="PTHR33449:SF1">
    <property type="entry name" value="NUCLEOID-ASSOCIATED PROTEIN YBAB"/>
    <property type="match status" value="1"/>
</dbReference>
<dbReference type="Pfam" id="PF02575">
    <property type="entry name" value="YbaB_DNA_bd"/>
    <property type="match status" value="1"/>
</dbReference>
<dbReference type="PIRSF" id="PIRSF004555">
    <property type="entry name" value="UCP004555"/>
    <property type="match status" value="1"/>
</dbReference>
<dbReference type="SUPFAM" id="SSF82607">
    <property type="entry name" value="YbaB-like"/>
    <property type="match status" value="1"/>
</dbReference>
<proteinExistence type="inferred from homology"/>
<sequence>MFGKGGLGNLMKQAQQMQERMQKMQEEIAQLEVTGEAGAGLIKVTINGAHNCRRIDIDPSLMEDDKEMLEDLIAAAFNDAVRRAEEMQKEKMASVTAGMSLPPGFKMPF</sequence>
<comment type="function">
    <text evidence="1">Binds to DNA and alters its conformation. May be involved in regulation of gene expression, nucleoid organization and DNA protection.</text>
</comment>
<comment type="subunit">
    <text evidence="1">Homodimer.</text>
</comment>
<comment type="subcellular location">
    <subcellularLocation>
        <location evidence="1">Cytoplasm</location>
        <location evidence="1">Nucleoid</location>
    </subcellularLocation>
</comment>
<comment type="similarity">
    <text evidence="1">Belongs to the YbaB/EbfC family.</text>
</comment>
<keyword id="KW-0963">Cytoplasm</keyword>
<keyword id="KW-0238">DNA-binding</keyword>
<reference key="1">
    <citation type="submission" date="2008-02" db="EMBL/GenBank/DDBJ databases">
        <title>Complete sequence of Haemophilus somnus 2336.</title>
        <authorList>
            <consortium name="US DOE Joint Genome Institute"/>
            <person name="Siddaramappa S."/>
            <person name="Duncan A.J."/>
            <person name="Challacombe J.F."/>
            <person name="Rainey D."/>
            <person name="Gillaspy A.F."/>
            <person name="Carson M."/>
            <person name="Gipson J."/>
            <person name="Gipson M."/>
            <person name="Bruce D."/>
            <person name="Detter J.C."/>
            <person name="Han C.S."/>
            <person name="Land M."/>
            <person name="Tapia R."/>
            <person name="Thompson L.S."/>
            <person name="Orvis J."/>
            <person name="Zaitshik J."/>
            <person name="Barnes G."/>
            <person name="Brettin T.S."/>
            <person name="Dyer D.W."/>
            <person name="Inzana T.J."/>
        </authorList>
    </citation>
    <scope>NUCLEOTIDE SEQUENCE [LARGE SCALE GENOMIC DNA]</scope>
    <source>
        <strain>2336</strain>
    </source>
</reference>
<organism>
    <name type="scientific">Histophilus somni (strain 2336)</name>
    <name type="common">Haemophilus somnus</name>
    <dbReference type="NCBI Taxonomy" id="228400"/>
    <lineage>
        <taxon>Bacteria</taxon>
        <taxon>Pseudomonadati</taxon>
        <taxon>Pseudomonadota</taxon>
        <taxon>Gammaproteobacteria</taxon>
        <taxon>Pasteurellales</taxon>
        <taxon>Pasteurellaceae</taxon>
        <taxon>Histophilus</taxon>
    </lineage>
</organism>
<name>Y308_HISS2</name>
<protein>
    <recommendedName>
        <fullName evidence="1">Nucleoid-associated protein HSM_0308</fullName>
    </recommendedName>
</protein>
<gene>
    <name type="ordered locus">HSM_0308</name>
</gene>
<feature type="chain" id="PRO_1000114614" description="Nucleoid-associated protein HSM_0308">
    <location>
        <begin position="1"/>
        <end position="109"/>
    </location>
</feature>
<accession>B0UWK6</accession>